<sequence length="404" mass="41780">MDMMKKRKLDENGNGLNTNGGGTIGPTRLSPQDARKIIERFTTDQLLDLLQEAIVRHPDVLESVRLTADSDISQRKLFIRGLAADTTTEGLRSLFSSYGDLEEAIVILDKVTGKSKGYGFVTFMHVDGALLALKEPSKKIDGRVTVTQLAASGNQGTGSQIADISMRKIYVANVPFDMPADRLLNHFMAYGDVEEGPLGFDKVTGKSRGFALFVYKTAEGAQAALADPVKVIDGKHLNCKLAVDGKKGGKPGMPQAQDGGSGHGHVHGEGMGMVRPAGPYGAAGGISAYGGYSGGPPAHHMNSTHSSMGVGSAGYGGHYGGYGGPGGTGVYGGLGGGYGGPGTGSGQYRMPPSSMPGGGGYPESGHYGLSSSAGYPGQHHQAVGTSPVPRVPHGGMYPNGPPNY</sequence>
<protein>
    <recommendedName>
        <fullName>UBP1-associated protein 2C</fullName>
    </recommendedName>
</protein>
<reference key="1">
    <citation type="journal article" date="2000" name="DNA Res.">
        <title>Structural analysis of Arabidopsis thaliana chromosome 3. II. Sequence features of the 4,251,695 bp regions covered by 90 P1, TAC and BAC clones.</title>
        <authorList>
            <person name="Kaneko T."/>
            <person name="Katoh T."/>
            <person name="Sato S."/>
            <person name="Nakamura Y."/>
            <person name="Asamizu E."/>
            <person name="Tabata S."/>
        </authorList>
    </citation>
    <scope>NUCLEOTIDE SEQUENCE [LARGE SCALE GENOMIC DNA]</scope>
    <source>
        <strain>cv. Columbia</strain>
        <tissue>Rosette leaf</tissue>
    </source>
</reference>
<reference key="2">
    <citation type="journal article" date="2017" name="Plant J.">
        <title>Araport11: a complete reannotation of the Arabidopsis thaliana reference genome.</title>
        <authorList>
            <person name="Cheng C.Y."/>
            <person name="Krishnakumar V."/>
            <person name="Chan A.P."/>
            <person name="Thibaud-Nissen F."/>
            <person name="Schobel S."/>
            <person name="Town C.D."/>
        </authorList>
    </citation>
    <scope>GENOME REANNOTATION</scope>
    <source>
        <strain>cv. Columbia</strain>
    </source>
</reference>
<reference key="3">
    <citation type="journal article" date="2003" name="Science">
        <title>Empirical analysis of transcriptional activity in the Arabidopsis genome.</title>
        <authorList>
            <person name="Yamada K."/>
            <person name="Lim J."/>
            <person name="Dale J.M."/>
            <person name="Chen H."/>
            <person name="Shinn P."/>
            <person name="Palm C.J."/>
            <person name="Southwick A.M."/>
            <person name="Wu H.C."/>
            <person name="Kim C.J."/>
            <person name="Nguyen M."/>
            <person name="Pham P.K."/>
            <person name="Cheuk R.F."/>
            <person name="Karlin-Newmann G."/>
            <person name="Liu S.X."/>
            <person name="Lam B."/>
            <person name="Sakano H."/>
            <person name="Wu T."/>
            <person name="Yu G."/>
            <person name="Miranda M."/>
            <person name="Quach H.L."/>
            <person name="Tripp M."/>
            <person name="Chang C.H."/>
            <person name="Lee J.M."/>
            <person name="Toriumi M.J."/>
            <person name="Chan M.M."/>
            <person name="Tang C.C."/>
            <person name="Onodera C.S."/>
            <person name="Deng J.M."/>
            <person name="Akiyama K."/>
            <person name="Ansari Y."/>
            <person name="Arakawa T."/>
            <person name="Banh J."/>
            <person name="Banno F."/>
            <person name="Bowser L."/>
            <person name="Brooks S.Y."/>
            <person name="Carninci P."/>
            <person name="Chao Q."/>
            <person name="Choy N."/>
            <person name="Enju A."/>
            <person name="Goldsmith A.D."/>
            <person name="Gurjal M."/>
            <person name="Hansen N.F."/>
            <person name="Hayashizaki Y."/>
            <person name="Johnson-Hopson C."/>
            <person name="Hsuan V.W."/>
            <person name="Iida K."/>
            <person name="Karnes M."/>
            <person name="Khan S."/>
            <person name="Koesema E."/>
            <person name="Ishida J."/>
            <person name="Jiang P.X."/>
            <person name="Jones T."/>
            <person name="Kawai J."/>
            <person name="Kamiya A."/>
            <person name="Meyers C."/>
            <person name="Nakajima M."/>
            <person name="Narusaka M."/>
            <person name="Seki M."/>
            <person name="Sakurai T."/>
            <person name="Satou M."/>
            <person name="Tamse R."/>
            <person name="Vaysberg M."/>
            <person name="Wallender E.K."/>
            <person name="Wong C."/>
            <person name="Yamamura Y."/>
            <person name="Yuan S."/>
            <person name="Shinozaki K."/>
            <person name="Davis R.W."/>
            <person name="Theologis A."/>
            <person name="Ecker J.R."/>
        </authorList>
    </citation>
    <scope>NUCLEOTIDE SEQUENCE [LARGE SCALE MRNA]</scope>
    <source>
        <strain>cv. Columbia</strain>
    </source>
</reference>
<reference key="4">
    <citation type="journal article" date="2009" name="DNA Res.">
        <title>Analysis of multiple occurrences of alternative splicing events in Arabidopsis thaliana using novel sequenced full-length cDNAs.</title>
        <authorList>
            <person name="Iida K."/>
            <person name="Fukami-Kobayashi K."/>
            <person name="Toyoda A."/>
            <person name="Sakaki Y."/>
            <person name="Kobayashi M."/>
            <person name="Seki M."/>
            <person name="Shinozaki K."/>
        </authorList>
    </citation>
    <scope>NUCLEOTIDE SEQUENCE [LARGE SCALE MRNA]</scope>
    <source>
        <strain>cv. Columbia</strain>
    </source>
</reference>
<reference key="5">
    <citation type="journal article" date="2008" name="Plant Mol. Biol.">
        <title>Characterization of wound-responsive RNA-binding proteins and their splice variants in Arabidopsis.</title>
        <authorList>
            <person name="Bove J."/>
            <person name="Kim C.Y."/>
            <person name="Gibson C.A."/>
            <person name="Assmann S.M."/>
        </authorList>
    </citation>
    <scope>SUBCELLULAR LOCATION</scope>
    <scope>TISSUE SPECIFICITY</scope>
    <scope>INDUCTION</scope>
</reference>
<reference key="6">
    <citation type="journal article" date="2008" name="New Phytol.">
        <title>Overexpression of wound-responsive RNA-binding proteins induces leaf senescence and hypersensitive-like cell death.</title>
        <authorList>
            <person name="Kim C.Y."/>
            <person name="Bove J."/>
            <person name="Assmann S.M."/>
        </authorList>
    </citation>
    <scope>SUBCELLULAR LOCATION</scope>
</reference>
<proteinExistence type="evidence at transcript level"/>
<name>UBA2C_ARATH</name>
<comment type="function">
    <text evidence="1">Heterogeneous nuclear ribonucleoprotein (hnRNP)-like protein that acts as a component of a complex regulating the turnover of mRNAs in the nucleus. Binds with high affinity to RNA molecules that contain U-rich sequences in 3'-UTRs. May function in complex with UBP1 and contribute to the stabilization of mRNAs in the nucleus (By similarity).</text>
</comment>
<comment type="subcellular location">
    <subcellularLocation>
        <location evidence="4 5">Nucleus</location>
    </subcellularLocation>
    <text>Mainly localized into nuclear speckles.</text>
</comment>
<comment type="tissue specificity">
    <text evidence="4">Expressed in root apical and lateral meristems, young leaves and embryos.</text>
</comment>
<comment type="induction">
    <text evidence="4">By wounding.</text>
</comment>
<comment type="miscellaneous">
    <text evidence="6">Plants over-expressing UB2A1 display severe growth defects consisting of premature cell death and chlorosis.</text>
</comment>
<feature type="chain" id="PRO_0000425442" description="UBP1-associated protein 2C">
    <location>
        <begin position="1"/>
        <end position="404"/>
    </location>
</feature>
<feature type="domain" description="RRM 1" evidence="2">
    <location>
        <begin position="75"/>
        <end position="152"/>
    </location>
</feature>
<feature type="domain" description="RRM 2" evidence="2">
    <location>
        <begin position="167"/>
        <end position="248"/>
    </location>
</feature>
<feature type="region of interest" description="Disordered" evidence="3">
    <location>
        <begin position="1"/>
        <end position="29"/>
    </location>
</feature>
<feature type="region of interest" description="Disordered" evidence="3">
    <location>
        <begin position="246"/>
        <end position="270"/>
    </location>
</feature>
<feature type="region of interest" description="Disordered" evidence="3">
    <location>
        <begin position="344"/>
        <end position="404"/>
    </location>
</feature>
<dbReference type="EMBL" id="AP000370">
    <property type="protein sequence ID" value="BAA97064.1"/>
    <property type="molecule type" value="Genomic_DNA"/>
</dbReference>
<dbReference type="EMBL" id="CP002686">
    <property type="protein sequence ID" value="AEE75602.1"/>
    <property type="molecule type" value="Genomic_DNA"/>
</dbReference>
<dbReference type="EMBL" id="CP002686">
    <property type="protein sequence ID" value="AEE75603.1"/>
    <property type="molecule type" value="Genomic_DNA"/>
</dbReference>
<dbReference type="EMBL" id="AY063846">
    <property type="protein sequence ID" value="AAL36202.1"/>
    <property type="molecule type" value="mRNA"/>
</dbReference>
<dbReference type="EMBL" id="AY091228">
    <property type="protein sequence ID" value="AAM14167.1"/>
    <property type="molecule type" value="mRNA"/>
</dbReference>
<dbReference type="EMBL" id="AK316731">
    <property type="protein sequence ID" value="BAH19456.1"/>
    <property type="molecule type" value="mRNA"/>
</dbReference>
<dbReference type="RefSeq" id="NP_188119.1">
    <property type="nucleotide sequence ID" value="NM_112363.4"/>
</dbReference>
<dbReference type="RefSeq" id="NP_974317.1">
    <property type="nucleotide sequence ID" value="NM_202588.2"/>
</dbReference>
<dbReference type="SMR" id="Q9LKA4"/>
<dbReference type="BioGRID" id="6064">
    <property type="interactions" value="3"/>
</dbReference>
<dbReference type="FunCoup" id="Q9LKA4">
    <property type="interactions" value="944"/>
</dbReference>
<dbReference type="IntAct" id="Q9LKA4">
    <property type="interactions" value="3"/>
</dbReference>
<dbReference type="STRING" id="3702.Q9LKA4"/>
<dbReference type="GlyGen" id="Q9LKA4">
    <property type="glycosylation" value="2 sites, 1 O-linked glycan (2 sites)"/>
</dbReference>
<dbReference type="iPTMnet" id="Q9LKA4"/>
<dbReference type="PaxDb" id="3702-AT3G15010.2"/>
<dbReference type="ProteomicsDB" id="228597"/>
<dbReference type="EnsemblPlants" id="AT3G15010.1">
    <property type="protein sequence ID" value="AT3G15010.1"/>
    <property type="gene ID" value="AT3G15010"/>
</dbReference>
<dbReference type="EnsemblPlants" id="AT3G15010.2">
    <property type="protein sequence ID" value="AT3G15010.2"/>
    <property type="gene ID" value="AT3G15010"/>
</dbReference>
<dbReference type="GeneID" id="820730"/>
<dbReference type="Gramene" id="AT3G15010.1">
    <property type="protein sequence ID" value="AT3G15010.1"/>
    <property type="gene ID" value="AT3G15010"/>
</dbReference>
<dbReference type="Gramene" id="AT3G15010.2">
    <property type="protein sequence ID" value="AT3G15010.2"/>
    <property type="gene ID" value="AT3G15010"/>
</dbReference>
<dbReference type="KEGG" id="ath:AT3G15010"/>
<dbReference type="Araport" id="AT3G15010"/>
<dbReference type="TAIR" id="AT3G15010"/>
<dbReference type="eggNOG" id="KOG0118">
    <property type="taxonomic scope" value="Eukaryota"/>
</dbReference>
<dbReference type="HOGENOM" id="CLU_012062_1_6_1"/>
<dbReference type="InParanoid" id="Q9LKA4"/>
<dbReference type="OMA" id="FMAYGDV"/>
<dbReference type="OrthoDB" id="1875751at2759"/>
<dbReference type="PhylomeDB" id="Q9LKA4"/>
<dbReference type="CD-CODE" id="4299E36E">
    <property type="entry name" value="Nucleolus"/>
</dbReference>
<dbReference type="PRO" id="PR:Q9LKA4"/>
<dbReference type="Proteomes" id="UP000006548">
    <property type="component" value="Chromosome 3"/>
</dbReference>
<dbReference type="ExpressionAtlas" id="Q9LKA4">
    <property type="expression patterns" value="baseline and differential"/>
</dbReference>
<dbReference type="GO" id="GO:0005730">
    <property type="term" value="C:nucleolus"/>
    <property type="evidence" value="ECO:0007005"/>
    <property type="project" value="TAIR"/>
</dbReference>
<dbReference type="GO" id="GO:0005634">
    <property type="term" value="C:nucleus"/>
    <property type="evidence" value="ECO:0000314"/>
    <property type="project" value="TAIR"/>
</dbReference>
<dbReference type="GO" id="GO:0003729">
    <property type="term" value="F:mRNA binding"/>
    <property type="evidence" value="ECO:0000314"/>
    <property type="project" value="TAIR"/>
</dbReference>
<dbReference type="GO" id="GO:0008219">
    <property type="term" value="P:cell death"/>
    <property type="evidence" value="ECO:0000315"/>
    <property type="project" value="TAIR"/>
</dbReference>
<dbReference type="GO" id="GO:0006952">
    <property type="term" value="P:defense response"/>
    <property type="evidence" value="ECO:0000315"/>
    <property type="project" value="TAIR"/>
</dbReference>
<dbReference type="GO" id="GO:0009693">
    <property type="term" value="P:ethylene biosynthetic process"/>
    <property type="evidence" value="ECO:0000315"/>
    <property type="project" value="TAIR"/>
</dbReference>
<dbReference type="GO" id="GO:0010150">
    <property type="term" value="P:leaf senescence"/>
    <property type="evidence" value="ECO:0000315"/>
    <property type="project" value="TAIR"/>
</dbReference>
<dbReference type="CDD" id="cd21608">
    <property type="entry name" value="RRM2_NsCP33_like"/>
    <property type="match status" value="1"/>
</dbReference>
<dbReference type="FunFam" id="3.30.70.330:FF:000640">
    <property type="entry name" value="UBP1-associated protein 2C"/>
    <property type="match status" value="1"/>
</dbReference>
<dbReference type="FunFam" id="3.30.70.330:FF:000529">
    <property type="entry name" value="UBP1-associated protein 2C isoform A"/>
    <property type="match status" value="1"/>
</dbReference>
<dbReference type="Gene3D" id="3.30.70.330">
    <property type="match status" value="2"/>
</dbReference>
<dbReference type="InterPro" id="IPR012677">
    <property type="entry name" value="Nucleotide-bd_a/b_plait_sf"/>
</dbReference>
<dbReference type="InterPro" id="IPR035979">
    <property type="entry name" value="RBD_domain_sf"/>
</dbReference>
<dbReference type="InterPro" id="IPR050886">
    <property type="entry name" value="RNA-binding_reg"/>
</dbReference>
<dbReference type="InterPro" id="IPR048289">
    <property type="entry name" value="RRM2_NsCP33-like"/>
</dbReference>
<dbReference type="InterPro" id="IPR000504">
    <property type="entry name" value="RRM_dom"/>
</dbReference>
<dbReference type="PANTHER" id="PTHR48024">
    <property type="entry name" value="GEO13361P1-RELATED"/>
    <property type="match status" value="1"/>
</dbReference>
<dbReference type="PANTHER" id="PTHR48024:SF25">
    <property type="entry name" value="UBP1-ASSOCIATED PROTEIN 2C"/>
    <property type="match status" value="1"/>
</dbReference>
<dbReference type="Pfam" id="PF00076">
    <property type="entry name" value="RRM_1"/>
    <property type="match status" value="2"/>
</dbReference>
<dbReference type="SMART" id="SM00360">
    <property type="entry name" value="RRM"/>
    <property type="match status" value="2"/>
</dbReference>
<dbReference type="SUPFAM" id="SSF54928">
    <property type="entry name" value="RNA-binding domain, RBD"/>
    <property type="match status" value="2"/>
</dbReference>
<dbReference type="PROSITE" id="PS50102">
    <property type="entry name" value="RRM"/>
    <property type="match status" value="2"/>
</dbReference>
<keyword id="KW-0539">Nucleus</keyword>
<keyword id="KW-1185">Reference proteome</keyword>
<keyword id="KW-0677">Repeat</keyword>
<keyword id="KW-0694">RNA-binding</keyword>
<organism>
    <name type="scientific">Arabidopsis thaliana</name>
    <name type="common">Mouse-ear cress</name>
    <dbReference type="NCBI Taxonomy" id="3702"/>
    <lineage>
        <taxon>Eukaryota</taxon>
        <taxon>Viridiplantae</taxon>
        <taxon>Streptophyta</taxon>
        <taxon>Embryophyta</taxon>
        <taxon>Tracheophyta</taxon>
        <taxon>Spermatophyta</taxon>
        <taxon>Magnoliopsida</taxon>
        <taxon>eudicotyledons</taxon>
        <taxon>Gunneridae</taxon>
        <taxon>Pentapetalae</taxon>
        <taxon>rosids</taxon>
        <taxon>malvids</taxon>
        <taxon>Brassicales</taxon>
        <taxon>Brassicaceae</taxon>
        <taxon>Camelineae</taxon>
        <taxon>Arabidopsis</taxon>
    </lineage>
</organism>
<accession>Q9LKA4</accession>
<evidence type="ECO:0000250" key="1"/>
<evidence type="ECO:0000255" key="2">
    <source>
        <dbReference type="PROSITE-ProRule" id="PRU00176"/>
    </source>
</evidence>
<evidence type="ECO:0000256" key="3">
    <source>
        <dbReference type="SAM" id="MobiDB-lite"/>
    </source>
</evidence>
<evidence type="ECO:0000269" key="4">
    <source>
    </source>
</evidence>
<evidence type="ECO:0000269" key="5">
    <source>
    </source>
</evidence>
<evidence type="ECO:0000305" key="6">
    <source>
    </source>
</evidence>
<gene>
    <name type="primary">UBA2C</name>
    <name type="ordered locus">At3g15010</name>
    <name type="ORF">K15M2.15</name>
</gene>